<protein>
    <recommendedName>
        <fullName evidence="1">Leucine--tRNA ligase</fullName>
        <ecNumber evidence="1">6.1.1.4</ecNumber>
    </recommendedName>
    <alternativeName>
        <fullName evidence="1">Leucyl-tRNA synthetase</fullName>
        <shortName evidence="1">LeuRS</shortName>
    </alternativeName>
</protein>
<dbReference type="EC" id="6.1.1.4" evidence="1"/>
<dbReference type="EMBL" id="CP000828">
    <property type="protein sequence ID" value="ABW26077.1"/>
    <property type="molecule type" value="Genomic_DNA"/>
</dbReference>
<dbReference type="RefSeq" id="WP_012161635.1">
    <property type="nucleotide sequence ID" value="NC_009925.1"/>
</dbReference>
<dbReference type="SMR" id="B0C1R1"/>
<dbReference type="STRING" id="329726.AM1_1037"/>
<dbReference type="KEGG" id="amr:AM1_1037"/>
<dbReference type="eggNOG" id="COG0495">
    <property type="taxonomic scope" value="Bacteria"/>
</dbReference>
<dbReference type="HOGENOM" id="CLU_004427_0_0_3"/>
<dbReference type="OrthoDB" id="9810365at2"/>
<dbReference type="Proteomes" id="UP000000268">
    <property type="component" value="Chromosome"/>
</dbReference>
<dbReference type="GO" id="GO:0005829">
    <property type="term" value="C:cytosol"/>
    <property type="evidence" value="ECO:0007669"/>
    <property type="project" value="TreeGrafter"/>
</dbReference>
<dbReference type="GO" id="GO:0002161">
    <property type="term" value="F:aminoacyl-tRNA deacylase activity"/>
    <property type="evidence" value="ECO:0007669"/>
    <property type="project" value="InterPro"/>
</dbReference>
<dbReference type="GO" id="GO:0005524">
    <property type="term" value="F:ATP binding"/>
    <property type="evidence" value="ECO:0007669"/>
    <property type="project" value="UniProtKB-UniRule"/>
</dbReference>
<dbReference type="GO" id="GO:0004823">
    <property type="term" value="F:leucine-tRNA ligase activity"/>
    <property type="evidence" value="ECO:0007669"/>
    <property type="project" value="UniProtKB-UniRule"/>
</dbReference>
<dbReference type="GO" id="GO:0006429">
    <property type="term" value="P:leucyl-tRNA aminoacylation"/>
    <property type="evidence" value="ECO:0007669"/>
    <property type="project" value="UniProtKB-UniRule"/>
</dbReference>
<dbReference type="CDD" id="cd07958">
    <property type="entry name" value="Anticodon_Ia_Leu_BEm"/>
    <property type="match status" value="1"/>
</dbReference>
<dbReference type="CDD" id="cd00812">
    <property type="entry name" value="LeuRS_core"/>
    <property type="match status" value="1"/>
</dbReference>
<dbReference type="FunFam" id="3.40.50.620:FF:000003">
    <property type="entry name" value="Leucine--tRNA ligase"/>
    <property type="match status" value="1"/>
</dbReference>
<dbReference type="FunFam" id="1.10.730.10:FF:000011">
    <property type="entry name" value="Leucine--tRNA ligase chloroplastic/mitochondrial"/>
    <property type="match status" value="1"/>
</dbReference>
<dbReference type="FunFam" id="3.40.50.620:FF:000100">
    <property type="entry name" value="probable leucine--tRNA ligase, mitochondrial"/>
    <property type="match status" value="1"/>
</dbReference>
<dbReference type="Gene3D" id="3.40.50.620">
    <property type="entry name" value="HUPs"/>
    <property type="match status" value="2"/>
</dbReference>
<dbReference type="Gene3D" id="1.10.730.10">
    <property type="entry name" value="Isoleucyl-tRNA Synthetase, Domain 1"/>
    <property type="match status" value="2"/>
</dbReference>
<dbReference type="HAMAP" id="MF_00049_B">
    <property type="entry name" value="Leu_tRNA_synth_B"/>
    <property type="match status" value="1"/>
</dbReference>
<dbReference type="InterPro" id="IPR001412">
    <property type="entry name" value="aa-tRNA-synth_I_CS"/>
</dbReference>
<dbReference type="InterPro" id="IPR002300">
    <property type="entry name" value="aa-tRNA-synth_Ia"/>
</dbReference>
<dbReference type="InterPro" id="IPR002302">
    <property type="entry name" value="Leu-tRNA-ligase"/>
</dbReference>
<dbReference type="InterPro" id="IPR025709">
    <property type="entry name" value="Leu_tRNA-synth_edit"/>
</dbReference>
<dbReference type="InterPro" id="IPR013155">
    <property type="entry name" value="M/V/L/I-tRNA-synth_anticd-bd"/>
</dbReference>
<dbReference type="InterPro" id="IPR015413">
    <property type="entry name" value="Methionyl/Leucyl_tRNA_Synth"/>
</dbReference>
<dbReference type="InterPro" id="IPR014729">
    <property type="entry name" value="Rossmann-like_a/b/a_fold"/>
</dbReference>
<dbReference type="InterPro" id="IPR009080">
    <property type="entry name" value="tRNAsynth_Ia_anticodon-bd"/>
</dbReference>
<dbReference type="InterPro" id="IPR009008">
    <property type="entry name" value="Val/Leu/Ile-tRNA-synth_edit"/>
</dbReference>
<dbReference type="NCBIfam" id="TIGR00396">
    <property type="entry name" value="leuS_bact"/>
    <property type="match status" value="1"/>
</dbReference>
<dbReference type="PANTHER" id="PTHR43740:SF2">
    <property type="entry name" value="LEUCINE--TRNA LIGASE, MITOCHONDRIAL"/>
    <property type="match status" value="1"/>
</dbReference>
<dbReference type="PANTHER" id="PTHR43740">
    <property type="entry name" value="LEUCYL-TRNA SYNTHETASE"/>
    <property type="match status" value="1"/>
</dbReference>
<dbReference type="Pfam" id="PF08264">
    <property type="entry name" value="Anticodon_1"/>
    <property type="match status" value="1"/>
</dbReference>
<dbReference type="Pfam" id="PF00133">
    <property type="entry name" value="tRNA-synt_1"/>
    <property type="match status" value="2"/>
</dbReference>
<dbReference type="Pfam" id="PF13603">
    <property type="entry name" value="tRNA-synt_1_2"/>
    <property type="match status" value="1"/>
</dbReference>
<dbReference type="Pfam" id="PF09334">
    <property type="entry name" value="tRNA-synt_1g"/>
    <property type="match status" value="1"/>
</dbReference>
<dbReference type="PRINTS" id="PR00985">
    <property type="entry name" value="TRNASYNTHLEU"/>
</dbReference>
<dbReference type="SUPFAM" id="SSF47323">
    <property type="entry name" value="Anticodon-binding domain of a subclass of class I aminoacyl-tRNA synthetases"/>
    <property type="match status" value="1"/>
</dbReference>
<dbReference type="SUPFAM" id="SSF52374">
    <property type="entry name" value="Nucleotidylyl transferase"/>
    <property type="match status" value="1"/>
</dbReference>
<dbReference type="SUPFAM" id="SSF50677">
    <property type="entry name" value="ValRS/IleRS/LeuRS editing domain"/>
    <property type="match status" value="1"/>
</dbReference>
<dbReference type="PROSITE" id="PS00178">
    <property type="entry name" value="AA_TRNA_LIGASE_I"/>
    <property type="match status" value="1"/>
</dbReference>
<name>SYL_ACAM1</name>
<feature type="chain" id="PRO_1000074823" description="Leucine--tRNA ligase">
    <location>
        <begin position="1"/>
        <end position="855"/>
    </location>
</feature>
<feature type="region of interest" description="Disordered" evidence="2">
    <location>
        <begin position="292"/>
        <end position="311"/>
    </location>
</feature>
<feature type="short sequence motif" description="'HIGH' region">
    <location>
        <begin position="42"/>
        <end position="52"/>
    </location>
</feature>
<feature type="short sequence motif" description="'KMSKS' region">
    <location>
        <begin position="614"/>
        <end position="618"/>
    </location>
</feature>
<feature type="compositionally biased region" description="Basic and acidic residues" evidence="2">
    <location>
        <begin position="293"/>
        <end position="303"/>
    </location>
</feature>
<feature type="binding site" evidence="1">
    <location>
        <position position="617"/>
    </location>
    <ligand>
        <name>ATP</name>
        <dbReference type="ChEBI" id="CHEBI:30616"/>
    </ligand>
</feature>
<reference key="1">
    <citation type="journal article" date="2008" name="Proc. Natl. Acad. Sci. U.S.A.">
        <title>Niche adaptation and genome expansion in the chlorophyll d-producing cyanobacterium Acaryochloris marina.</title>
        <authorList>
            <person name="Swingley W.D."/>
            <person name="Chen M."/>
            <person name="Cheung P.C."/>
            <person name="Conrad A.L."/>
            <person name="Dejesa L.C."/>
            <person name="Hao J."/>
            <person name="Honchak B.M."/>
            <person name="Karbach L.E."/>
            <person name="Kurdoglu A."/>
            <person name="Lahiri S."/>
            <person name="Mastrian S.D."/>
            <person name="Miyashita H."/>
            <person name="Page L."/>
            <person name="Ramakrishna P."/>
            <person name="Satoh S."/>
            <person name="Sattley W.M."/>
            <person name="Shimada Y."/>
            <person name="Taylor H.L."/>
            <person name="Tomo T."/>
            <person name="Tsuchiya T."/>
            <person name="Wang Z.T."/>
            <person name="Raymond J."/>
            <person name="Mimuro M."/>
            <person name="Blankenship R.E."/>
            <person name="Touchman J.W."/>
        </authorList>
    </citation>
    <scope>NUCLEOTIDE SEQUENCE [LARGE SCALE GENOMIC DNA]</scope>
    <source>
        <strain>MBIC 11017</strain>
    </source>
</reference>
<comment type="catalytic activity">
    <reaction evidence="1">
        <text>tRNA(Leu) + L-leucine + ATP = L-leucyl-tRNA(Leu) + AMP + diphosphate</text>
        <dbReference type="Rhea" id="RHEA:11688"/>
        <dbReference type="Rhea" id="RHEA-COMP:9613"/>
        <dbReference type="Rhea" id="RHEA-COMP:9622"/>
        <dbReference type="ChEBI" id="CHEBI:30616"/>
        <dbReference type="ChEBI" id="CHEBI:33019"/>
        <dbReference type="ChEBI" id="CHEBI:57427"/>
        <dbReference type="ChEBI" id="CHEBI:78442"/>
        <dbReference type="ChEBI" id="CHEBI:78494"/>
        <dbReference type="ChEBI" id="CHEBI:456215"/>
        <dbReference type="EC" id="6.1.1.4"/>
    </reaction>
</comment>
<comment type="subcellular location">
    <subcellularLocation>
        <location evidence="1">Cytoplasm</location>
    </subcellularLocation>
</comment>
<comment type="similarity">
    <text evidence="1">Belongs to the class-I aminoacyl-tRNA synthetase family.</text>
</comment>
<organism>
    <name type="scientific">Acaryochloris marina (strain MBIC 11017)</name>
    <dbReference type="NCBI Taxonomy" id="329726"/>
    <lineage>
        <taxon>Bacteria</taxon>
        <taxon>Bacillati</taxon>
        <taxon>Cyanobacteriota</taxon>
        <taxon>Cyanophyceae</taxon>
        <taxon>Acaryochloridales</taxon>
        <taxon>Acaryochloridaceae</taxon>
        <taxon>Acaryochloris</taxon>
    </lineage>
</organism>
<evidence type="ECO:0000255" key="1">
    <source>
        <dbReference type="HAMAP-Rule" id="MF_00049"/>
    </source>
</evidence>
<evidence type="ECO:0000256" key="2">
    <source>
        <dbReference type="SAM" id="MobiDB-lite"/>
    </source>
</evidence>
<accession>B0C1R1</accession>
<gene>
    <name evidence="1" type="primary">leuS</name>
    <name type="ordered locus">AM1_1037</name>
</gene>
<keyword id="KW-0030">Aminoacyl-tRNA synthetase</keyword>
<keyword id="KW-0067">ATP-binding</keyword>
<keyword id="KW-0963">Cytoplasm</keyword>
<keyword id="KW-0436">Ligase</keyword>
<keyword id="KW-0547">Nucleotide-binding</keyword>
<keyword id="KW-0648">Protein biosynthesis</keyword>
<keyword id="KW-1185">Reference proteome</keyword>
<proteinExistence type="inferred from homology"/>
<sequence>MESRYNPTEIEPKWQASWAKQGLDATPEDTSKPKFYALSMFPYPSGSLHVGHTRNYVITDVIARLKRMQGYRVLQPMGWDAFGLPAENAAIARGIHPAEWTYANMAQMKKQLEPLGLSIDWSREIATCSPDYYRWTQWIFLQFLDMGLAYQKEAAVNWDPVDQTVLANEQVDNEGRSWRSGAKVERKLLRQWFLKITDYAEELLTDLDKLTGWPERVKTMQANWIGKSVGAYLEFPIVGMDEKVAVFTTRPDTVYGVTYVVLAPEHPLTPQVTSKAQKKAVDKFIEAVGAESEMDRTAEDKPKKGIPTGGKAINPFTGEEIPIWIADYVLYEYGTGAVMGVPAHDTRDFVFAQQNKLPIQTVIVPEGGDAETPLEAAYTEPGLMVNSGEFDGKVSTEGKQAIIAKAETKGWGKARVQYRLRDWLISRQRYWGVPIPVIHCPNCGAVPVPEADLPVELPEDVEFSAQGGSPLAKLESWVNVACPNCGADAKRETDTMDTFIDSSWYFLRYPDAKNDKAVFDSAKTNDWLPVDQYVGGIEHAILHLLYSRFFTKVMRDRKLLNFDEPFKKLLTQGMVQALTYKNPETGQYIAPINVDADDPKDPETGAPLEAFYEKMSKSKYNGVPPEEVTNKYGADTARLFTLFKAPPEKDLEWEGADVEGQFRFLNRVWRLVSEHAAQAKGKKAKVNKAKLSKTEKELRRSIHIAIKETSEDLDGDYQFNTAVSELMKLSNALSDSKEKASPVYAEGVETLLLLLTPFAPHISEELWENLGHSESILGQTWPQVDEEALVADEITLVIQIMGKTRGTIQVPAGSSREDLEQLARESEVAQRYIAGKEVKKVIVVPGKLVNFVVPK</sequence>